<accession>Q2FZK7</accession>
<accession>O32391</accession>
<accession>P52081</accession>
<accession>Q7WTC6</accession>
<accession>Q7WY94</accession>
<accession>Q7WY95</accession>
<reference key="1">
    <citation type="journal article" date="1995" name="Proc. Natl. Acad. Sci. U.S.A.">
        <title>A Staphylococcus aureus autolysin that has an N-acetylmuramoyl-L-alanine amidase domain and an endo-beta-N-acetylglucosaminidase domain: cloning, sequence analysis, and characterization.</title>
        <authorList>
            <person name="Oshida T."/>
            <person name="Sugai M."/>
            <person name="Komatsuzawa H."/>
            <person name="Hong Y.-M."/>
            <person name="Suginaka H."/>
            <person name="Tomasz A."/>
        </authorList>
    </citation>
    <scope>NUCLEOTIDE SEQUENCE [GENOMIC DNA]</scope>
    <scope>PROTEIN SEQUENCE OF 205-214 AND 776-792</scope>
</reference>
<reference key="2">
    <citation type="submission" date="1995-04" db="EMBL/GenBank/DDBJ databases">
        <authorList>
            <person name="Foster S.J."/>
        </authorList>
    </citation>
    <scope>NUCLEOTIDE SEQUENCE [GENOMIC DNA]</scope>
</reference>
<reference key="3">
    <citation type="book" date="2006" name="Gram positive pathogens, 2nd edition">
        <title>The Staphylococcus aureus NCTC 8325 genome.</title>
        <editorList>
            <person name="Fischetti V."/>
            <person name="Novick R."/>
            <person name="Ferretti J."/>
            <person name="Portnoy D."/>
            <person name="Rood J."/>
        </editorList>
        <authorList>
            <person name="Gillaspy A.F."/>
            <person name="Worrell V."/>
            <person name="Orvis J."/>
            <person name="Roe B.A."/>
            <person name="Dyer D.W."/>
            <person name="Iandolo J.J."/>
        </authorList>
    </citation>
    <scope>NUCLEOTIDE SEQUENCE [LARGE SCALE GENOMIC DNA]</scope>
    <source>
        <strain>NCTC 8325 / PS 47</strain>
    </source>
</reference>
<protein>
    <recommendedName>
        <fullName>Bifunctional autolysin</fullName>
    </recommendedName>
    <domain>
        <recommendedName>
            <fullName>N-acetylmuramoyl-L-alanine amidase</fullName>
            <ecNumber>3.5.1.28</ecNumber>
        </recommendedName>
    </domain>
    <domain>
        <recommendedName>
            <fullName>Mannosyl-glycoprotein endo-beta-N-acetylglucosaminidase</fullName>
            <ecNumber>3.2.1.96</ecNumber>
        </recommendedName>
    </domain>
</protein>
<dbReference type="EC" id="3.5.1.28"/>
<dbReference type="EC" id="3.2.1.96"/>
<dbReference type="EMBL" id="D17366">
    <property type="protein sequence ID" value="BAA04185.1"/>
    <property type="molecule type" value="Genomic_DNA"/>
</dbReference>
<dbReference type="EMBL" id="L41499">
    <property type="protein sequence ID" value="AAA99982.1"/>
    <property type="molecule type" value="Genomic_DNA"/>
</dbReference>
<dbReference type="EMBL" id="CP000253">
    <property type="protein sequence ID" value="ABD30118.1"/>
    <property type="molecule type" value="Genomic_DNA"/>
</dbReference>
<dbReference type="RefSeq" id="WP_001074547.1">
    <property type="nucleotide sequence ID" value="NZ_LS483365.1"/>
</dbReference>
<dbReference type="RefSeq" id="YP_499546.1">
    <property type="nucleotide sequence ID" value="NC_007795.1"/>
</dbReference>
<dbReference type="PDB" id="4KNK">
    <property type="method" value="X-ray"/>
    <property type="resolution" value="1.12 A"/>
    <property type="chains" value="A/B=198-421"/>
</dbReference>
<dbReference type="PDB" id="4KNL">
    <property type="method" value="X-ray"/>
    <property type="resolution" value="1.55 A"/>
    <property type="chains" value="A/B/C/D=198-421"/>
</dbReference>
<dbReference type="PDBsum" id="4KNK"/>
<dbReference type="PDBsum" id="4KNL"/>
<dbReference type="SMR" id="Q2FZK7"/>
<dbReference type="STRING" id="93061.SAOUHSC_00994"/>
<dbReference type="CAZy" id="GH73">
    <property type="family name" value="Glycoside Hydrolase Family 73"/>
</dbReference>
<dbReference type="PaxDb" id="1280-SAXN108_1050"/>
<dbReference type="GeneID" id="3920394"/>
<dbReference type="KEGG" id="sao:SAOUHSC_00994"/>
<dbReference type="PATRIC" id="fig|93061.5.peg.912"/>
<dbReference type="eggNOG" id="COG3266">
    <property type="taxonomic scope" value="Bacteria"/>
</dbReference>
<dbReference type="eggNOG" id="COG4193">
    <property type="taxonomic scope" value="Bacteria"/>
</dbReference>
<dbReference type="eggNOG" id="COG5632">
    <property type="taxonomic scope" value="Bacteria"/>
</dbReference>
<dbReference type="HOGENOM" id="CLU_005906_0_0_9"/>
<dbReference type="OrthoDB" id="9816557at2"/>
<dbReference type="EvolutionaryTrace" id="Q2FZK7"/>
<dbReference type="Proteomes" id="UP000008816">
    <property type="component" value="Chromosome"/>
</dbReference>
<dbReference type="GO" id="GO:0005576">
    <property type="term" value="C:extracellular region"/>
    <property type="evidence" value="ECO:0007669"/>
    <property type="project" value="UniProtKB-SubCell"/>
</dbReference>
<dbReference type="GO" id="GO:0004040">
    <property type="term" value="F:amidase activity"/>
    <property type="evidence" value="ECO:0007669"/>
    <property type="project" value="InterPro"/>
</dbReference>
<dbReference type="GO" id="GO:0033925">
    <property type="term" value="F:mannosyl-glycoprotein endo-beta-N-acetylglucosaminidase activity"/>
    <property type="evidence" value="ECO:0007669"/>
    <property type="project" value="UniProtKB-EC"/>
</dbReference>
<dbReference type="GO" id="GO:0008745">
    <property type="term" value="F:N-acetylmuramoyl-L-alanine amidase activity"/>
    <property type="evidence" value="ECO:0007669"/>
    <property type="project" value="UniProtKB-EC"/>
</dbReference>
<dbReference type="GO" id="GO:0071555">
    <property type="term" value="P:cell wall organization"/>
    <property type="evidence" value="ECO:0007669"/>
    <property type="project" value="UniProtKB-KW"/>
</dbReference>
<dbReference type="GO" id="GO:0009253">
    <property type="term" value="P:peptidoglycan catabolic process"/>
    <property type="evidence" value="ECO:0007669"/>
    <property type="project" value="InterPro"/>
</dbReference>
<dbReference type="CDD" id="cd06583">
    <property type="entry name" value="PGRP"/>
    <property type="match status" value="1"/>
</dbReference>
<dbReference type="Gene3D" id="1.10.530.10">
    <property type="match status" value="1"/>
</dbReference>
<dbReference type="Gene3D" id="2.30.30.170">
    <property type="match status" value="7"/>
</dbReference>
<dbReference type="Gene3D" id="3.40.80.10">
    <property type="entry name" value="Peptidoglycan recognition protein-like"/>
    <property type="match status" value="1"/>
</dbReference>
<dbReference type="InterPro" id="IPR036505">
    <property type="entry name" value="Amidase/PGRP_sf"/>
</dbReference>
<dbReference type="InterPro" id="IPR002502">
    <property type="entry name" value="Amidase_domain"/>
</dbReference>
<dbReference type="InterPro" id="IPR025987">
    <property type="entry name" value="GW_dom"/>
</dbReference>
<dbReference type="InterPro" id="IPR038200">
    <property type="entry name" value="GW_dom_sf"/>
</dbReference>
<dbReference type="InterPro" id="IPR002901">
    <property type="entry name" value="MGlyc_endo_b_GlcNAc-like_dom"/>
</dbReference>
<dbReference type="Pfam" id="PF01510">
    <property type="entry name" value="Amidase_2"/>
    <property type="match status" value="1"/>
</dbReference>
<dbReference type="Pfam" id="PF01832">
    <property type="entry name" value="Glucosaminidase"/>
    <property type="match status" value="1"/>
</dbReference>
<dbReference type="Pfam" id="PF13457">
    <property type="entry name" value="GW"/>
    <property type="match status" value="6"/>
</dbReference>
<dbReference type="SMART" id="SM00644">
    <property type="entry name" value="Ami_2"/>
    <property type="match status" value="1"/>
</dbReference>
<dbReference type="SMART" id="SM00047">
    <property type="entry name" value="LYZ2"/>
    <property type="match status" value="1"/>
</dbReference>
<dbReference type="SUPFAM" id="SSF55846">
    <property type="entry name" value="N-acetylmuramoyl-L-alanine amidase-like"/>
    <property type="match status" value="1"/>
</dbReference>
<dbReference type="SUPFAM" id="SSF82057">
    <property type="entry name" value="Prokaryotic SH3-related domain"/>
    <property type="match status" value="1"/>
</dbReference>
<dbReference type="PROSITE" id="PS51780">
    <property type="entry name" value="GW"/>
    <property type="match status" value="7"/>
</dbReference>
<organism>
    <name type="scientific">Staphylococcus aureus (strain NCTC 8325 / PS 47)</name>
    <dbReference type="NCBI Taxonomy" id="93061"/>
    <lineage>
        <taxon>Bacteria</taxon>
        <taxon>Bacillati</taxon>
        <taxon>Bacillota</taxon>
        <taxon>Bacilli</taxon>
        <taxon>Bacillales</taxon>
        <taxon>Staphylococcaceae</taxon>
        <taxon>Staphylococcus</taxon>
    </lineage>
</organism>
<proteinExistence type="evidence at protein level"/>
<name>ATL_STAA8</name>
<sequence length="1256" mass="137384">MAKKFNYKLPSMVALTLVGSAVTAHQVQAAETTQDQTTNKNVLDSNKVKATTEQAKAEVKNPTQNISGTQVYQDPAIVQPKTANNKTGNAQVSQKVDTAQVNGDTRANQSATTNNTQPVAKSTSTTAPKTNTNVTNAGYSLVDDEDDNSENQINPELIKSAAKPAALETQYKTAAPKAATTSAPKAKTEATPKVTTFSASAQPRSVAATPKTSLPKYKPQVNSSINDYICKNNLKAPKIEEDYTSYFPKYAYRNGVGRPEGIVVHDTANDRSTINGEISYMKNNYQNAFVHAFVDGDRIIETAPTDYLSWGVGAVGNPRFINVEIVHTHDYASFARSMNNYADYAATQLQYYGLKPDSAEYDGNGTVWTHYAVSKYLGGTDHADPHGYLRSHNYSYDQLYDLINEKYLIKMGKVAPWGTQSTTTPTTPSKPTTPSKPSTGKLTVAANNGVAQIKPTNSGLYTTVYDKTGKATNEVQKTFAVSKTATLGNQKFYLVQDYNSGNKFGWVKEGDVVYNTAKSPVNVNQSYSIKPGTKLYTVPWGTSKQVAGSVSGSGNQTFKASKQQQIDKSIYLYGSVNGKSGWVSKAYLVDTAKPTPTPTPKPSTPTTNNKLTVSSLNGVAQINAKNNGLFTTVYDKTGKPTKEVQKTFAVTKEASLGGNKFYLVKDYNSPTLIGWVKQGDVIYNNAKSPVNVMQTYTVKPGTKLYSVPWGTYKQEAGAVSGTGNQTFKATKQQQIDKSIYLFGTVNGKSGWVSKAYLAVPAAPKKAVAQPKTAVKAYTVTKPQTTQTVSKIAQVKPNNTGIRASVYEKTAKNGAKYADRTFYVTKERAHGNETYVLLNNTSHNIPLGWFNVKDLNVQNLGKEVKTTQKYTVNKSNNGLSMVPWGTKNQVILTGNNIAQGTFNATKQVSVGKDVYLYGTINNRTGWVNAKDLTAPTAVKPTTSAAKDYNYTYVIKNGNGYYYVTPNSDTAKYSLKAFNEQPFAVVKEQVINGQTWYYGKLSNGKLAWIKSTDLAKELIKYNQTGMTLNQVAQIQAGLQYKPQVQRVPGKWTDAKFNDVKHAMDTKRLAQDPALKYQFLRLDQPQNISIDKINQFLKGKGVLENQGAAFNKAAQMYGINEVYLISHALLETGNGTSQLAKGADVVNNKVVTNSNTKYHNVFGIAAYDNDPLREGIKYAKQAGWDTVSKAIVGGAKFIGNSYVKAGQNTLYKMRWNPAHPGTHQYATDVDWANINAKIIKGYYDKIGEVGKYFDIPQYK</sequence>
<comment type="function">
    <text evidence="1">Endohydrolysis of the di-N-acetylchitobiosyl unit in high-mannose glycopeptides and glycoproteins containing the -[(Man)5(GlcNAc)2]-Asn structure. One N-acetyl-D-glucosamine residue remains attached to the protein; the rest of the oligosaccharide is released intact. Cleaves the peptidoglycan connecting the daughter cells at the end of the cell division cycle, resulting in the separation of the two newly divided cells. Acts as an autolysin in penicillin-induced lysis (By similarity).</text>
</comment>
<comment type="catalytic activity">
    <reaction>
        <text>Hydrolyzes the link between N-acetylmuramoyl residues and L-amino acid residues in certain cell-wall glycopeptides.</text>
        <dbReference type="EC" id="3.5.1.28"/>
    </reaction>
</comment>
<comment type="catalytic activity">
    <reaction>
        <text>an N(4)-(oligosaccharide-(1-&gt;3)-[oligosaccharide-(1-&gt;6)]-beta-D-Man-(1-&gt;4)-beta-D-GlcNAc-(1-&gt;4)-alpha-D-GlcNAc)-L-asparaginyl-[protein] + H2O = an oligosaccharide-(1-&gt;3)-[oligosaccharide-(1-&gt;6)]-beta-D-Man-(1-&gt;4)-D-GlcNAc + N(4)-(N-acetyl-beta-D-glucosaminyl)-L-asparaginyl-[protein]</text>
        <dbReference type="Rhea" id="RHEA:73067"/>
        <dbReference type="Rhea" id="RHEA-COMP:12603"/>
        <dbReference type="Rhea" id="RHEA-COMP:18176"/>
        <dbReference type="ChEBI" id="CHEBI:15377"/>
        <dbReference type="ChEBI" id="CHEBI:132248"/>
        <dbReference type="ChEBI" id="CHEBI:192714"/>
        <dbReference type="ChEBI" id="CHEBI:192715"/>
        <dbReference type="EC" id="3.2.1.96"/>
    </reaction>
</comment>
<comment type="subunit">
    <text evidence="1">Oligomer; forms a ring structure at the cell surface which is important for efficient partitioning of daughter cells after cell division.</text>
</comment>
<comment type="subcellular location">
    <subcellularLocation>
        <location evidence="1">Secreted</location>
    </subcellularLocation>
    <text evidence="1">Secreted, and then anchored on the cell surface at the peripheral cell wall above the completed septum (septal region), for the next cell division cycle.</text>
</comment>
<comment type="domain">
    <text evidence="1">The GW domains are responsible for directing the proteins to the septal region.</text>
</comment>
<comment type="PTM">
    <text evidence="1">Undergoes proteolytic processing to generate the two extracellular lytic enzymes, probably at the septal region on the cell surface.</text>
</comment>
<comment type="similarity">
    <text evidence="5">In the N-terminal section; belongs to the N-acetylmuramoyl-L-alanine amidase 2 family.</text>
</comment>
<comment type="similarity">
    <text evidence="5">In the C-terminal section; belongs to the glycosyl hydrolase 73 family.</text>
</comment>
<gene>
    <name type="primary">atl</name>
    <name type="synonym">nag</name>
    <name type="ordered locus">SAOUHSC_00994</name>
</gene>
<evidence type="ECO:0000250" key="1"/>
<evidence type="ECO:0000255" key="2"/>
<evidence type="ECO:0000255" key="3">
    <source>
        <dbReference type="PROSITE-ProRule" id="PRU01116"/>
    </source>
</evidence>
<evidence type="ECO:0000256" key="4">
    <source>
        <dbReference type="SAM" id="MobiDB-lite"/>
    </source>
</evidence>
<evidence type="ECO:0000305" key="5"/>
<evidence type="ECO:0007829" key="6">
    <source>
        <dbReference type="PDB" id="4KNK"/>
    </source>
</evidence>
<feature type="signal peptide" evidence="2">
    <location>
        <begin position="1"/>
        <end position="29"/>
    </location>
</feature>
<feature type="chain" id="PRO_0000247668" description="Bifunctional autolysin">
    <location>
        <begin position="30"/>
        <end position="1256"/>
    </location>
</feature>
<feature type="domain" description="GW 1" evidence="3">
    <location>
        <begin position="443"/>
        <end position="517"/>
    </location>
</feature>
<feature type="domain" description="GW 2" evidence="3">
    <location>
        <begin position="519"/>
        <end position="593"/>
    </location>
</feature>
<feature type="domain" description="GW 3" evidence="3">
    <location>
        <begin position="612"/>
        <end position="686"/>
    </location>
</feature>
<feature type="domain" description="GW 4" evidence="3">
    <location>
        <begin position="688"/>
        <end position="762"/>
    </location>
</feature>
<feature type="domain" description="GW 5" evidence="3">
    <location>
        <begin position="784"/>
        <end position="859"/>
    </location>
</feature>
<feature type="domain" description="GW 6" evidence="3">
    <location>
        <begin position="861"/>
        <end position="936"/>
    </location>
</feature>
<feature type="domain" description="GW 7" evidence="3">
    <location>
        <begin position="943"/>
        <end position="1017"/>
    </location>
</feature>
<feature type="region of interest" description="Disordered" evidence="4">
    <location>
        <begin position="103"/>
        <end position="151"/>
    </location>
</feature>
<feature type="region of interest" description="Disordered" evidence="4">
    <location>
        <begin position="172"/>
        <end position="214"/>
    </location>
</feature>
<feature type="region of interest" description="N-acetylmuramoyl-L-alanine amidase">
    <location>
        <begin position="199"/>
        <end position="775"/>
    </location>
</feature>
<feature type="region of interest" description="Disordered" evidence="4">
    <location>
        <begin position="419"/>
        <end position="440"/>
    </location>
</feature>
<feature type="region of interest" description="Endo-beta-N-acetylglucosaminidase">
    <location>
        <begin position="776"/>
        <end position="1256"/>
    </location>
</feature>
<feature type="compositionally biased region" description="Polar residues" evidence="4">
    <location>
        <begin position="103"/>
        <end position="138"/>
    </location>
</feature>
<feature type="compositionally biased region" description="Low complexity" evidence="4">
    <location>
        <begin position="172"/>
        <end position="196"/>
    </location>
</feature>
<feature type="compositionally biased region" description="Low complexity" evidence="4">
    <location>
        <begin position="421"/>
        <end position="439"/>
    </location>
</feature>
<feature type="helix" evidence="6">
    <location>
        <begin position="224"/>
        <end position="231"/>
    </location>
</feature>
<feature type="strand" evidence="6">
    <location>
        <begin position="239"/>
        <end position="241"/>
    </location>
</feature>
<feature type="strand" evidence="6">
    <location>
        <begin position="261"/>
        <end position="266"/>
    </location>
</feature>
<feature type="helix" evidence="6">
    <location>
        <begin position="274"/>
        <end position="284"/>
    </location>
</feature>
<feature type="turn" evidence="6">
    <location>
        <begin position="285"/>
        <end position="287"/>
    </location>
</feature>
<feature type="strand" evidence="6">
    <location>
        <begin position="291"/>
        <end position="294"/>
    </location>
</feature>
<feature type="strand" evidence="6">
    <location>
        <begin position="299"/>
        <end position="301"/>
    </location>
</feature>
<feature type="strand" evidence="6">
    <location>
        <begin position="310"/>
        <end position="312"/>
    </location>
</feature>
<feature type="helix" evidence="6">
    <location>
        <begin position="313"/>
        <end position="316"/>
    </location>
</feature>
<feature type="turn" evidence="6">
    <location>
        <begin position="317"/>
        <end position="319"/>
    </location>
</feature>
<feature type="strand" evidence="6">
    <location>
        <begin position="320"/>
        <end position="325"/>
    </location>
</feature>
<feature type="helix" evidence="6">
    <location>
        <begin position="331"/>
        <end position="352"/>
    </location>
</feature>
<feature type="turn" evidence="6">
    <location>
        <begin position="360"/>
        <end position="362"/>
    </location>
</feature>
<feature type="strand" evidence="6">
    <location>
        <begin position="365"/>
        <end position="369"/>
    </location>
</feature>
<feature type="helix" evidence="6">
    <location>
        <begin position="370"/>
        <end position="376"/>
    </location>
</feature>
<feature type="helix" evidence="6">
    <location>
        <begin position="386"/>
        <end position="391"/>
    </location>
</feature>
<feature type="helix" evidence="6">
    <location>
        <begin position="396"/>
        <end position="410"/>
    </location>
</feature>
<keyword id="KW-0002">3D-structure</keyword>
<keyword id="KW-0961">Cell wall biogenesis/degradation</keyword>
<keyword id="KW-0903">Direct protein sequencing</keyword>
<keyword id="KW-0378">Hydrolase</keyword>
<keyword id="KW-0511">Multifunctional enzyme</keyword>
<keyword id="KW-1185">Reference proteome</keyword>
<keyword id="KW-0677">Repeat</keyword>
<keyword id="KW-0964">Secreted</keyword>
<keyword id="KW-0732">Signal</keyword>